<protein>
    <recommendedName>
        <fullName>E3 ubiquitin-protein ligase MGRN1</fullName>
        <ecNumber>2.3.2.27</ecNumber>
    </recommendedName>
    <alternativeName>
        <fullName>Mahogunin RING finger protein 1</fullName>
    </alternativeName>
    <alternativeName>
        <fullName>RING finger protein 156</fullName>
    </alternativeName>
    <alternativeName>
        <fullName evidence="11">RING-type E3 ubiquitin transferase MGRN1</fullName>
    </alternativeName>
</protein>
<proteinExistence type="evidence at protein level"/>
<accession>O60291</accession>
<accession>A4URL3</accession>
<accession>A4URL4</accession>
<accession>Q86W76</accession>
<keyword id="KW-0025">Alternative splicing</keyword>
<keyword id="KW-1003">Cell membrane</keyword>
<keyword id="KW-0963">Cytoplasm</keyword>
<keyword id="KW-0967">Endosome</keyword>
<keyword id="KW-0449">Lipoprotein</keyword>
<keyword id="KW-0472">Membrane</keyword>
<keyword id="KW-0479">Metal-binding</keyword>
<keyword id="KW-0519">Myristate</keyword>
<keyword id="KW-0539">Nucleus</keyword>
<keyword id="KW-0597">Phosphoprotein</keyword>
<keyword id="KW-1267">Proteomics identification</keyword>
<keyword id="KW-1185">Reference proteome</keyword>
<keyword id="KW-0808">Transferase</keyword>
<keyword id="KW-0832">Ubl conjugation</keyword>
<keyword id="KW-0833">Ubl conjugation pathway</keyword>
<keyword id="KW-0862">Zinc</keyword>
<keyword id="KW-0863">Zinc-finger</keyword>
<sequence length="552" mass="60753">MGSILSRRIAGVEDIDIQANSAYRYPPKSGNYFASHFFMGGEKFDTPHPEGYLFGENMDLNFLGSRPVQFPYVTPAPHEPVKTLRSLVNIRKDSLRLVRYKDDADSPTEDGDKPRVLYSLEFTFDADARVAITIYCQASEEFLNGRAVYSPKSPSLQSETVHYKRGVSQQFSLPSFKIDFSEWKDDELNFDLDRGVFPVVIQAVVDEGDVVEVTGHAHVLLAAFEKHMDGSFSVKPLKQKQIVDRVSYLLQEIYGIENKNNQETKPSDDENSDNSNECVVCLSDLRDTLILPCRHLCLCTSCADTLRYQANNCPICRLPFRALLQIRAVRKKPGALSPVSFSPVLAQSLEHDEHSCPFKKSKPHPASLASKKPKRETNSDSVPPGYEPISLLEALNGLRAVSPAIPSAPLYEEITYSGISDGLSQASCPLAAIDHILDSSRQKGRPQSKAPDSTLRSPSSPIHEEDEEKLSEDVDAPPPLGGAELALRESSSPESFITEEVDESSSPQQGTRAASIENVLQDSSPEHCGRGPPADIYLPALGPDSCSVGIDE</sequence>
<name>MGRN1_HUMAN</name>
<organism>
    <name type="scientific">Homo sapiens</name>
    <name type="common">Human</name>
    <dbReference type="NCBI Taxonomy" id="9606"/>
    <lineage>
        <taxon>Eukaryota</taxon>
        <taxon>Metazoa</taxon>
        <taxon>Chordata</taxon>
        <taxon>Craniata</taxon>
        <taxon>Vertebrata</taxon>
        <taxon>Euteleostomi</taxon>
        <taxon>Mammalia</taxon>
        <taxon>Eutheria</taxon>
        <taxon>Euarchontoglires</taxon>
        <taxon>Primates</taxon>
        <taxon>Haplorrhini</taxon>
        <taxon>Catarrhini</taxon>
        <taxon>Hominidae</taxon>
        <taxon>Homo</taxon>
    </lineage>
</organism>
<gene>
    <name type="primary">MGRN1</name>
    <name type="synonym">KIAA0544</name>
    <name type="synonym">RNF156</name>
</gene>
<feature type="initiator methionine" description="Removed">
    <location>
        <position position="1"/>
    </location>
</feature>
<feature type="chain" id="PRO_0000246687" description="E3 ubiquitin-protein ligase MGRN1">
    <location>
        <begin position="2"/>
        <end position="552"/>
    </location>
</feature>
<feature type="zinc finger region" description="RING-type" evidence="3">
    <location>
        <begin position="278"/>
        <end position="317"/>
    </location>
</feature>
<feature type="region of interest" description="Disordered" evidence="4">
    <location>
        <begin position="355"/>
        <end position="384"/>
    </location>
</feature>
<feature type="region of interest" description="Disordered" evidence="4">
    <location>
        <begin position="439"/>
        <end position="552"/>
    </location>
</feature>
<feature type="short sequence motif" description="Required for TSG101-binding">
    <location>
        <begin position="406"/>
        <end position="409"/>
    </location>
</feature>
<feature type="compositionally biased region" description="Polar residues" evidence="4">
    <location>
        <begin position="450"/>
        <end position="460"/>
    </location>
</feature>
<feature type="compositionally biased region" description="Acidic residues" evidence="4">
    <location>
        <begin position="464"/>
        <end position="475"/>
    </location>
</feature>
<feature type="compositionally biased region" description="Polar residues" evidence="4">
    <location>
        <begin position="504"/>
        <end position="523"/>
    </location>
</feature>
<feature type="modified residue" description="Phosphotyrosine" evidence="2">
    <location>
        <position position="411"/>
    </location>
</feature>
<feature type="modified residue" description="Phosphoserine" evidence="2">
    <location>
        <position position="471"/>
    </location>
</feature>
<feature type="modified residue" description="Phosphoserine" evidence="12 13">
    <location>
        <position position="524"/>
    </location>
</feature>
<feature type="lipid moiety-binding region" description="N-myristoyl glycine" evidence="8">
    <location>
        <position position="2"/>
    </location>
</feature>
<feature type="splice variant" id="VSP_036462" description="In isoform 3 and isoform 4." evidence="10">
    <location>
        <begin position="356"/>
        <end position="377"/>
    </location>
</feature>
<feature type="splice variant" id="VSP_019853" description="In isoform 2 and isoform 3." evidence="9 10">
    <original>ALGPDSCSVGIDE</original>
    <variation>GRPTSMETAHGLATTSPTWPPLGGPSPDPSAAELTPL</variation>
    <location>
        <begin position="540"/>
        <end position="552"/>
    </location>
</feature>
<feature type="mutagenesis site" description="Loss of TSG101-binding and drastic reduction of TSG101-ubiquitination." evidence="5">
    <original>PSAP</original>
    <variation>ASAA</variation>
    <location>
        <begin position="406"/>
        <end position="409"/>
    </location>
</feature>
<feature type="sequence conflict" description="In Ref. 1; ABO69623/ABO69624." evidence="11" ref="1">
    <original>Y</original>
    <variation>H</variation>
    <location>
        <position position="248"/>
    </location>
</feature>
<feature type="sequence conflict" description="In Ref. 1; ABO69623/ABO69624." evidence="11" ref="1">
    <original>Y</original>
    <variation>H</variation>
    <location>
        <position position="537"/>
    </location>
</feature>
<comment type="function">
    <text evidence="2 5 6 7">E3 ubiquitin-protein ligase. Mediates monoubiquitination at multiple sites of TSG101 in the presence of UBE2D1, but not of UBE2G1, nor UBE2H. Plays a role in the regulation of endosome-to-lysosome trafficking. Impairs MC1R- and MC4R-signaling by competing with GNAS-binding to MCRs and inhibiting agonist-induced cAMP production. Does not inhibit ADRB2-signaling. Does not promote MC1R ubiquitination. Acts also as a negative regulator of hedgehog signaling (By similarity).</text>
</comment>
<comment type="catalytic activity">
    <reaction>
        <text>S-ubiquitinyl-[E2 ubiquitin-conjugating enzyme]-L-cysteine + [acceptor protein]-L-lysine = [E2 ubiquitin-conjugating enzyme]-L-cysteine + N(6)-ubiquitinyl-[acceptor protein]-L-lysine.</text>
        <dbReference type="EC" id="2.3.2.27"/>
    </reaction>
</comment>
<comment type="pathway">
    <text>Protein modification; protein ubiquitination.</text>
</comment>
<comment type="subunit">
    <text evidence="1">Interacts with MC1R and MC4R, but not with TBXA2R. Interacts with TSG101. Interacts with mislocalized cytosolically exposed PRNP; this interaction alters MGRN1 subcellular location and causes lysosomal enlargement (By similarity).</text>
</comment>
<comment type="interaction">
    <interactant intactId="EBI-2129851">
        <id>O60291</id>
    </interactant>
    <interactant intactId="EBI-346882">
        <id>Q99816</id>
        <label>TSG101</label>
    </interactant>
    <organismsDiffer>false</organismsDiffer>
    <experiments>5</experiments>
</comment>
<comment type="subcellular location">
    <subcellularLocation>
        <location evidence="5 7">Early endosome</location>
    </subcellularLocation>
    <text>The endosomal localization is dependent on the interaction with TSG101.</text>
</comment>
<comment type="subcellular location">
    <molecule>Isoform 1</molecule>
    <subcellularLocation>
        <location>Cytoplasm</location>
        <location>Cytosol</location>
    </subcellularLocation>
    <subcellularLocation>
        <location>Nucleus</location>
    </subcellularLocation>
    <text>Translocation from the cytosol to the nucleus is seen only in the presence of MC1R and MC4R, but not TBXA2R. Excluded from nucleoli.</text>
</comment>
<comment type="subcellular location">
    <molecule>Isoform 2</molecule>
    <subcellularLocation>
        <location>Cytoplasm</location>
        <location>Cytosol</location>
    </subcellularLocation>
    <subcellularLocation>
        <location>Nucleus</location>
    </subcellularLocation>
    <text>Translocation from the cytosol to the nucleus is seen only in the presence of MC1R and MC4R, but not TBXA2R. Excluded from nucleoli.</text>
</comment>
<comment type="subcellular location">
    <molecule>Isoform 3</molecule>
    <subcellularLocation>
        <location>Cytoplasm</location>
        <location>Cytosol</location>
    </subcellularLocation>
    <subcellularLocation>
        <location>Cell membrane</location>
    </subcellularLocation>
</comment>
<comment type="subcellular location">
    <molecule>Isoform 4</molecule>
    <subcellularLocation>
        <location>Cytoplasm</location>
        <location>Cytosol</location>
    </subcellularLocation>
    <subcellularLocation>
        <location>Cell membrane</location>
    </subcellularLocation>
</comment>
<comment type="alternative products">
    <event type="alternative splicing"/>
    <isoform>
        <id>O60291-1</id>
        <name>1</name>
        <name>(+)S</name>
        <sequence type="displayed"/>
    </isoform>
    <isoform>
        <id>O60291-2</id>
        <name>2</name>
        <name>(+)L</name>
        <sequence type="described" ref="VSP_019853"/>
    </isoform>
    <isoform>
        <id>O60291-3</id>
        <name>3</name>
        <name>(-)L</name>
        <sequence type="described" ref="VSP_036462 VSP_019853"/>
    </isoform>
    <isoform>
        <id>O60291-4</id>
        <name>4</name>
        <name>(-)S</name>
        <sequence type="described" ref="VSP_036462"/>
    </isoform>
</comment>
<comment type="domain">
    <text evidence="1">The RING finger is required for ubiquitin ligase activity.</text>
</comment>
<comment type="PTM">
    <text evidence="1">Autoubiquitinated in vitro.</text>
</comment>
<comment type="sequence caution" evidence="11">
    <conflict type="erroneous initiation">
        <sequence resource="EMBL-CDS" id="BAA25470"/>
    </conflict>
</comment>
<dbReference type="EC" id="2.3.2.27"/>
<dbReference type="EMBL" id="EF471397">
    <property type="protein sequence ID" value="ABO69623.2"/>
    <property type="molecule type" value="mRNA"/>
</dbReference>
<dbReference type="EMBL" id="EF471398">
    <property type="protein sequence ID" value="ABO69624.2"/>
    <property type="molecule type" value="mRNA"/>
</dbReference>
<dbReference type="EMBL" id="AB011116">
    <property type="protein sequence ID" value="BAA25470.1"/>
    <property type="status" value="ALT_INIT"/>
    <property type="molecule type" value="mRNA"/>
</dbReference>
<dbReference type="EMBL" id="AC023830">
    <property type="status" value="NOT_ANNOTATED_CDS"/>
    <property type="molecule type" value="Genomic_DNA"/>
</dbReference>
<dbReference type="EMBL" id="BC050389">
    <property type="protein sequence ID" value="AAH50389.1"/>
    <property type="molecule type" value="mRNA"/>
</dbReference>
<dbReference type="CCDS" id="CCDS42115.1">
    <molecule id="O60291-2"/>
</dbReference>
<dbReference type="CCDS" id="CCDS45401.2">
    <molecule id="O60291-4"/>
</dbReference>
<dbReference type="CCDS" id="CCDS45402.1">
    <molecule id="O60291-1"/>
</dbReference>
<dbReference type="CCDS" id="CCDS59256.1">
    <molecule id="O60291-3"/>
</dbReference>
<dbReference type="RefSeq" id="NP_001135761.2">
    <molecule id="O60291-3"/>
    <property type="nucleotide sequence ID" value="NM_001142289.3"/>
</dbReference>
<dbReference type="RefSeq" id="NP_001135762.1">
    <molecule id="O60291-1"/>
    <property type="nucleotide sequence ID" value="NM_001142290.3"/>
</dbReference>
<dbReference type="RefSeq" id="NP_001135763.2">
    <molecule id="O60291-4"/>
    <property type="nucleotide sequence ID" value="NM_001142291.3"/>
</dbReference>
<dbReference type="RefSeq" id="NP_056061.1">
    <molecule id="O60291-2"/>
    <property type="nucleotide sequence ID" value="NM_015246.4"/>
</dbReference>
<dbReference type="RefSeq" id="XP_005255277.1">
    <property type="nucleotide sequence ID" value="XM_005255220.3"/>
</dbReference>
<dbReference type="RefSeq" id="XP_005255278.1">
    <property type="nucleotide sequence ID" value="XM_005255221.3"/>
</dbReference>
<dbReference type="BioGRID" id="116890">
    <property type="interactions" value="159"/>
</dbReference>
<dbReference type="CORUM" id="O60291"/>
<dbReference type="ELM" id="O60291"/>
<dbReference type="FunCoup" id="O60291">
    <property type="interactions" value="3757"/>
</dbReference>
<dbReference type="IntAct" id="O60291">
    <property type="interactions" value="70"/>
</dbReference>
<dbReference type="MINT" id="O60291"/>
<dbReference type="STRING" id="9606.ENSP00000262370"/>
<dbReference type="GlyGen" id="O60291">
    <property type="glycosylation" value="1 site"/>
</dbReference>
<dbReference type="iPTMnet" id="O60291"/>
<dbReference type="PhosphoSitePlus" id="O60291"/>
<dbReference type="BioMuta" id="MGRN1"/>
<dbReference type="jPOST" id="O60291"/>
<dbReference type="MassIVE" id="O60291"/>
<dbReference type="PaxDb" id="9606-ENSP00000262370"/>
<dbReference type="PeptideAtlas" id="O60291"/>
<dbReference type="ProteomicsDB" id="49319">
    <molecule id="O60291-1"/>
</dbReference>
<dbReference type="ProteomicsDB" id="49320">
    <molecule id="O60291-2"/>
</dbReference>
<dbReference type="ProteomicsDB" id="49321">
    <molecule id="O60291-3"/>
</dbReference>
<dbReference type="ProteomicsDB" id="49322">
    <molecule id="O60291-4"/>
</dbReference>
<dbReference type="Pumba" id="O60291"/>
<dbReference type="Antibodypedia" id="2013">
    <property type="antibodies" value="270 antibodies from 28 providers"/>
</dbReference>
<dbReference type="DNASU" id="23295"/>
<dbReference type="Ensembl" id="ENST00000262370.12">
    <molecule id="O60291-2"/>
    <property type="protein sequence ID" value="ENSP00000262370.6"/>
    <property type="gene ID" value="ENSG00000102858.13"/>
</dbReference>
<dbReference type="Ensembl" id="ENST00000399577.9">
    <molecule id="O60291-1"/>
    <property type="protein sequence ID" value="ENSP00000382487.4"/>
    <property type="gene ID" value="ENSG00000102858.13"/>
</dbReference>
<dbReference type="Ensembl" id="ENST00000415496.5">
    <molecule id="O60291-4"/>
    <property type="protein sequence ID" value="ENSP00000393311.2"/>
    <property type="gene ID" value="ENSG00000102858.13"/>
</dbReference>
<dbReference type="Ensembl" id="ENST00000586183.5">
    <molecule id="O60291-4"/>
    <property type="protein sequence ID" value="ENSP00000465860.1"/>
    <property type="gene ID" value="ENSG00000102858.13"/>
</dbReference>
<dbReference type="Ensembl" id="ENST00000588994.5">
    <molecule id="O60291-3"/>
    <property type="protein sequence ID" value="ENSP00000468819.1"/>
    <property type="gene ID" value="ENSG00000102858.13"/>
</dbReference>
<dbReference type="GeneID" id="23295"/>
<dbReference type="KEGG" id="hsa:23295"/>
<dbReference type="MANE-Select" id="ENST00000262370.12">
    <molecule id="O60291-2"/>
    <property type="protein sequence ID" value="ENSP00000262370.6"/>
    <property type="RefSeq nucleotide sequence ID" value="NM_015246.4"/>
    <property type="RefSeq protein sequence ID" value="NP_056061.1"/>
</dbReference>
<dbReference type="UCSC" id="uc002cwz.4">
    <molecule id="O60291-1"/>
    <property type="organism name" value="human"/>
</dbReference>
<dbReference type="AGR" id="HGNC:20254"/>
<dbReference type="CTD" id="23295"/>
<dbReference type="DisGeNET" id="23295"/>
<dbReference type="GeneCards" id="MGRN1"/>
<dbReference type="HGNC" id="HGNC:20254">
    <property type="gene designation" value="MGRN1"/>
</dbReference>
<dbReference type="HPA" id="ENSG00000102858">
    <property type="expression patterns" value="Low tissue specificity"/>
</dbReference>
<dbReference type="MIM" id="607559">
    <property type="type" value="gene"/>
</dbReference>
<dbReference type="neXtProt" id="NX_O60291"/>
<dbReference type="OpenTargets" id="ENSG00000102858"/>
<dbReference type="PharmGKB" id="PA134941221"/>
<dbReference type="VEuPathDB" id="HostDB:ENSG00000102858"/>
<dbReference type="eggNOG" id="KOG4265">
    <property type="taxonomic scope" value="Eukaryota"/>
</dbReference>
<dbReference type="GeneTree" id="ENSGT00390000009925"/>
<dbReference type="InParanoid" id="O60291"/>
<dbReference type="OMA" id="YYYKKGA"/>
<dbReference type="OrthoDB" id="10014838at2759"/>
<dbReference type="PAN-GO" id="O60291">
    <property type="GO annotations" value="9 GO annotations based on evolutionary models"/>
</dbReference>
<dbReference type="PhylomeDB" id="O60291"/>
<dbReference type="TreeFam" id="TF314969"/>
<dbReference type="PathwayCommons" id="O60291"/>
<dbReference type="Reactome" id="R-HSA-983168">
    <property type="pathway name" value="Antigen processing: Ubiquitination &amp; Proteasome degradation"/>
</dbReference>
<dbReference type="SignaLink" id="O60291"/>
<dbReference type="SIGNOR" id="O60291"/>
<dbReference type="UniPathway" id="UPA00143"/>
<dbReference type="BioGRID-ORCS" id="23295">
    <property type="hits" value="30 hits in 1203 CRISPR screens"/>
</dbReference>
<dbReference type="ChiTaRS" id="MGRN1">
    <property type="organism name" value="human"/>
</dbReference>
<dbReference type="GenomeRNAi" id="23295"/>
<dbReference type="Pharos" id="O60291">
    <property type="development level" value="Tbio"/>
</dbReference>
<dbReference type="PRO" id="PR:O60291"/>
<dbReference type="Proteomes" id="UP000005640">
    <property type="component" value="Chromosome 16"/>
</dbReference>
<dbReference type="RNAct" id="O60291">
    <property type="molecule type" value="protein"/>
</dbReference>
<dbReference type="Bgee" id="ENSG00000102858">
    <property type="expression patterns" value="Expressed in right hemisphere of cerebellum and 168 other cell types or tissues"/>
</dbReference>
<dbReference type="ExpressionAtlas" id="O60291">
    <property type="expression patterns" value="baseline and differential"/>
</dbReference>
<dbReference type="GO" id="GO:0005737">
    <property type="term" value="C:cytoplasm"/>
    <property type="evidence" value="ECO:0000314"/>
    <property type="project" value="UniProtKB"/>
</dbReference>
<dbReference type="GO" id="GO:0005829">
    <property type="term" value="C:cytosol"/>
    <property type="evidence" value="ECO:0007669"/>
    <property type="project" value="UniProtKB-SubCell"/>
</dbReference>
<dbReference type="GO" id="GO:0005769">
    <property type="term" value="C:early endosome"/>
    <property type="evidence" value="ECO:0000314"/>
    <property type="project" value="UniProtKB"/>
</dbReference>
<dbReference type="GO" id="GO:0005783">
    <property type="term" value="C:endoplasmic reticulum"/>
    <property type="evidence" value="ECO:0000314"/>
    <property type="project" value="HPA"/>
</dbReference>
<dbReference type="GO" id="GO:0070062">
    <property type="term" value="C:extracellular exosome"/>
    <property type="evidence" value="ECO:0007005"/>
    <property type="project" value="UniProtKB"/>
</dbReference>
<dbReference type="GO" id="GO:0043231">
    <property type="term" value="C:intracellular membrane-bounded organelle"/>
    <property type="evidence" value="ECO:0000314"/>
    <property type="project" value="HPA"/>
</dbReference>
<dbReference type="GO" id="GO:0016020">
    <property type="term" value="C:membrane"/>
    <property type="evidence" value="ECO:0007005"/>
    <property type="project" value="UniProtKB"/>
</dbReference>
<dbReference type="GO" id="GO:0005634">
    <property type="term" value="C:nucleus"/>
    <property type="evidence" value="ECO:0000314"/>
    <property type="project" value="UniProtKB"/>
</dbReference>
<dbReference type="GO" id="GO:0005886">
    <property type="term" value="C:plasma membrane"/>
    <property type="evidence" value="ECO:0000314"/>
    <property type="project" value="UniProtKB"/>
</dbReference>
<dbReference type="GO" id="GO:0000151">
    <property type="term" value="C:ubiquitin ligase complex"/>
    <property type="evidence" value="ECO:0007669"/>
    <property type="project" value="Ensembl"/>
</dbReference>
<dbReference type="GO" id="GO:0061630">
    <property type="term" value="F:ubiquitin protein ligase activity"/>
    <property type="evidence" value="ECO:0000318"/>
    <property type="project" value="GO_Central"/>
</dbReference>
<dbReference type="GO" id="GO:0004842">
    <property type="term" value="F:ubiquitin-protein transferase activity"/>
    <property type="evidence" value="ECO:0000314"/>
    <property type="project" value="UniProtKB"/>
</dbReference>
<dbReference type="GO" id="GO:0008270">
    <property type="term" value="F:zinc ion binding"/>
    <property type="evidence" value="ECO:0007669"/>
    <property type="project" value="UniProtKB-KW"/>
</dbReference>
<dbReference type="GO" id="GO:0008333">
    <property type="term" value="P:endosome to lysosome transport"/>
    <property type="evidence" value="ECO:0000315"/>
    <property type="project" value="UniProtKB"/>
</dbReference>
<dbReference type="GO" id="GO:0007507">
    <property type="term" value="P:heart development"/>
    <property type="evidence" value="ECO:0007669"/>
    <property type="project" value="Ensembl"/>
</dbReference>
<dbReference type="GO" id="GO:0106072">
    <property type="term" value="P:negative regulation of adenylate cyclase-activating G protein-coupled receptor signaling pathway"/>
    <property type="evidence" value="ECO:0000314"/>
    <property type="project" value="UniProtKB"/>
</dbReference>
<dbReference type="GO" id="GO:0045744">
    <property type="term" value="P:negative regulation of G protein-coupled receptor signaling pathway"/>
    <property type="evidence" value="ECO:0000318"/>
    <property type="project" value="GO_Central"/>
</dbReference>
<dbReference type="GO" id="GO:0045879">
    <property type="term" value="P:negative regulation of smoothened signaling pathway"/>
    <property type="evidence" value="ECO:0000250"/>
    <property type="project" value="UniProtKB"/>
</dbReference>
<dbReference type="GO" id="GO:0006513">
    <property type="term" value="P:protein monoubiquitination"/>
    <property type="evidence" value="ECO:0000315"/>
    <property type="project" value="UniProtKB"/>
</dbReference>
<dbReference type="GO" id="GO:0000209">
    <property type="term" value="P:protein polyubiquitination"/>
    <property type="evidence" value="ECO:0007669"/>
    <property type="project" value="Ensembl"/>
</dbReference>
<dbReference type="GO" id="GO:0016567">
    <property type="term" value="P:protein ubiquitination"/>
    <property type="evidence" value="ECO:0000318"/>
    <property type="project" value="GO_Central"/>
</dbReference>
<dbReference type="GO" id="GO:0065003">
    <property type="term" value="P:protein-containing complex assembly"/>
    <property type="evidence" value="ECO:0007669"/>
    <property type="project" value="Ensembl"/>
</dbReference>
<dbReference type="GO" id="GO:0007224">
    <property type="term" value="P:smoothened signaling pathway"/>
    <property type="evidence" value="ECO:0007669"/>
    <property type="project" value="Ensembl"/>
</dbReference>
<dbReference type="CDD" id="cd16816">
    <property type="entry name" value="mRING-HC-C3HC5_MGRN1"/>
    <property type="match status" value="1"/>
</dbReference>
<dbReference type="FunFam" id="3.30.40.10:FF:000013">
    <property type="entry name" value="E3 ubiquitin-protein ligase MGRN1 isoform 1"/>
    <property type="match status" value="1"/>
</dbReference>
<dbReference type="Gene3D" id="3.30.40.10">
    <property type="entry name" value="Zinc/RING finger domain, C3HC4 (zinc finger)"/>
    <property type="match status" value="1"/>
</dbReference>
<dbReference type="InterPro" id="IPR045194">
    <property type="entry name" value="MGRN1/RNF157-like"/>
</dbReference>
<dbReference type="InterPro" id="IPR001841">
    <property type="entry name" value="Znf_RING"/>
</dbReference>
<dbReference type="InterPro" id="IPR013083">
    <property type="entry name" value="Znf_RING/FYVE/PHD"/>
</dbReference>
<dbReference type="PANTHER" id="PTHR22996:SF2">
    <property type="entry name" value="E3 UBIQUITIN-PROTEIN LIGASE MGRN1"/>
    <property type="match status" value="1"/>
</dbReference>
<dbReference type="PANTHER" id="PTHR22996">
    <property type="entry name" value="MAHOGUNIN"/>
    <property type="match status" value="1"/>
</dbReference>
<dbReference type="Pfam" id="PF13920">
    <property type="entry name" value="zf-C3HC4_3"/>
    <property type="match status" value="1"/>
</dbReference>
<dbReference type="SMART" id="SM00184">
    <property type="entry name" value="RING"/>
    <property type="match status" value="1"/>
</dbReference>
<dbReference type="SUPFAM" id="SSF57850">
    <property type="entry name" value="RING/U-box"/>
    <property type="match status" value="1"/>
</dbReference>
<dbReference type="PROSITE" id="PS50089">
    <property type="entry name" value="ZF_RING_2"/>
    <property type="match status" value="1"/>
</dbReference>
<reference key="1">
    <citation type="journal article" date="2009" name="J. Biol. Chem.">
        <title>Mahogunin ring finger-1 (MGRN1) E3 ubiquitin ligase inhibits signaling from melanocortin receptor by competition with Galphas.</title>
        <authorList>
            <person name="Perez-Oliva A.B."/>
            <person name="Olivares C."/>
            <person name="Jimenez-Cervantes C."/>
            <person name="Garcia-Borron J.C."/>
        </authorList>
    </citation>
    <scope>NUCLEOTIDE SEQUENCE [MRNA] (ISOFORMS 3 AND 4)</scope>
    <scope>FUNCTION</scope>
    <scope>INTERACTION WITH MC1R AND MC4R</scope>
    <scope>SUBCELLULAR LOCATION</scope>
</reference>
<reference key="2">
    <citation type="journal article" date="1998" name="DNA Res.">
        <title>Prediction of the coding sequences of unidentified human genes. IX. The complete sequences of 100 new cDNA clones from brain which can code for large proteins in vitro.</title>
        <authorList>
            <person name="Nagase T."/>
            <person name="Ishikawa K."/>
            <person name="Miyajima N."/>
            <person name="Tanaka A."/>
            <person name="Kotani H."/>
            <person name="Nomura N."/>
            <person name="Ohara O."/>
        </authorList>
    </citation>
    <scope>NUCLEOTIDE SEQUENCE [LARGE SCALE MRNA] (ISOFORM 1)</scope>
    <source>
        <tissue>Brain</tissue>
    </source>
</reference>
<reference key="3">
    <citation type="journal article" date="2004" name="Nature">
        <title>The sequence and analysis of duplication-rich human chromosome 16.</title>
        <authorList>
            <person name="Martin J."/>
            <person name="Han C."/>
            <person name="Gordon L.A."/>
            <person name="Terry A."/>
            <person name="Prabhakar S."/>
            <person name="She X."/>
            <person name="Xie G."/>
            <person name="Hellsten U."/>
            <person name="Chan Y.M."/>
            <person name="Altherr M."/>
            <person name="Couronne O."/>
            <person name="Aerts A."/>
            <person name="Bajorek E."/>
            <person name="Black S."/>
            <person name="Blumer H."/>
            <person name="Branscomb E."/>
            <person name="Brown N.C."/>
            <person name="Bruno W.J."/>
            <person name="Buckingham J.M."/>
            <person name="Callen D.F."/>
            <person name="Campbell C.S."/>
            <person name="Campbell M.L."/>
            <person name="Campbell E.W."/>
            <person name="Caoile C."/>
            <person name="Challacombe J.F."/>
            <person name="Chasteen L.A."/>
            <person name="Chertkov O."/>
            <person name="Chi H.C."/>
            <person name="Christensen M."/>
            <person name="Clark L.M."/>
            <person name="Cohn J.D."/>
            <person name="Denys M."/>
            <person name="Detter J.C."/>
            <person name="Dickson M."/>
            <person name="Dimitrijevic-Bussod M."/>
            <person name="Escobar J."/>
            <person name="Fawcett J.J."/>
            <person name="Flowers D."/>
            <person name="Fotopulos D."/>
            <person name="Glavina T."/>
            <person name="Gomez M."/>
            <person name="Gonzales E."/>
            <person name="Goodstein D."/>
            <person name="Goodwin L.A."/>
            <person name="Grady D.L."/>
            <person name="Grigoriev I."/>
            <person name="Groza M."/>
            <person name="Hammon N."/>
            <person name="Hawkins T."/>
            <person name="Haydu L."/>
            <person name="Hildebrand C.E."/>
            <person name="Huang W."/>
            <person name="Israni S."/>
            <person name="Jett J."/>
            <person name="Jewett P.B."/>
            <person name="Kadner K."/>
            <person name="Kimball H."/>
            <person name="Kobayashi A."/>
            <person name="Krawczyk M.-C."/>
            <person name="Leyba T."/>
            <person name="Longmire J.L."/>
            <person name="Lopez F."/>
            <person name="Lou Y."/>
            <person name="Lowry S."/>
            <person name="Ludeman T."/>
            <person name="Manohar C.F."/>
            <person name="Mark G.A."/>
            <person name="McMurray K.L."/>
            <person name="Meincke L.J."/>
            <person name="Morgan J."/>
            <person name="Moyzis R.K."/>
            <person name="Mundt M.O."/>
            <person name="Munk A.C."/>
            <person name="Nandkeshwar R.D."/>
            <person name="Pitluck S."/>
            <person name="Pollard M."/>
            <person name="Predki P."/>
            <person name="Parson-Quintana B."/>
            <person name="Ramirez L."/>
            <person name="Rash S."/>
            <person name="Retterer J."/>
            <person name="Ricke D.O."/>
            <person name="Robinson D.L."/>
            <person name="Rodriguez A."/>
            <person name="Salamov A."/>
            <person name="Saunders E.H."/>
            <person name="Scott D."/>
            <person name="Shough T."/>
            <person name="Stallings R.L."/>
            <person name="Stalvey M."/>
            <person name="Sutherland R.D."/>
            <person name="Tapia R."/>
            <person name="Tesmer J.G."/>
            <person name="Thayer N."/>
            <person name="Thompson L.S."/>
            <person name="Tice H."/>
            <person name="Torney D.C."/>
            <person name="Tran-Gyamfi M."/>
            <person name="Tsai M."/>
            <person name="Ulanovsky L.E."/>
            <person name="Ustaszewska A."/>
            <person name="Vo N."/>
            <person name="White P.S."/>
            <person name="Williams A.L."/>
            <person name="Wills P.L."/>
            <person name="Wu J.-R."/>
            <person name="Wu K."/>
            <person name="Yang J."/>
            <person name="DeJong P."/>
            <person name="Bruce D."/>
            <person name="Doggett N.A."/>
            <person name="Deaven L."/>
            <person name="Schmutz J."/>
            <person name="Grimwood J."/>
            <person name="Richardson P."/>
            <person name="Rokhsar D.S."/>
            <person name="Eichler E.E."/>
            <person name="Gilna P."/>
            <person name="Lucas S.M."/>
            <person name="Myers R.M."/>
            <person name="Rubin E.M."/>
            <person name="Pennacchio L.A."/>
        </authorList>
    </citation>
    <scope>NUCLEOTIDE SEQUENCE [LARGE SCALE GENOMIC DNA]</scope>
</reference>
<reference key="4">
    <citation type="journal article" date="2004" name="Genome Res.">
        <title>The status, quality, and expansion of the NIH full-length cDNA project: the Mammalian Gene Collection (MGC).</title>
        <authorList>
            <consortium name="The MGC Project Team"/>
        </authorList>
    </citation>
    <scope>NUCLEOTIDE SEQUENCE [LARGE SCALE MRNA] (ISOFORM 2)</scope>
    <source>
        <tissue>Leukocyte</tissue>
    </source>
</reference>
<reference key="5">
    <citation type="journal article" date="2007" name="Mol. Biol. Cell">
        <title>Spongiform neurodegeneration-associated E3 ligase Mahogunin ubiquitylates TSG101 and regulates endosomal trafficking.</title>
        <authorList>
            <person name="Kim B.Y."/>
            <person name="Olzmann J.A."/>
            <person name="Barsh G.S."/>
            <person name="Chin L.S."/>
            <person name="Li L."/>
        </authorList>
    </citation>
    <scope>FUNCTION</scope>
    <scope>INTERACTION WITH TSG101</scope>
    <scope>MUTAGENESIS OF 406-PRO--PRO-409</scope>
    <scope>SUBCELLULAR LOCATION</scope>
</reference>
<reference key="6">
    <citation type="journal article" date="2008" name="Proc. Natl. Acad. Sci. U.S.A.">
        <title>A quantitative atlas of mitotic phosphorylation.</title>
        <authorList>
            <person name="Dephoure N."/>
            <person name="Zhou C."/>
            <person name="Villen J."/>
            <person name="Beausoleil S.A."/>
            <person name="Bakalarski C.E."/>
            <person name="Elledge S.J."/>
            <person name="Gygi S.P."/>
        </authorList>
    </citation>
    <scope>PHOSPHORYLATION [LARGE SCALE ANALYSIS] AT SER-524</scope>
    <scope>IDENTIFICATION BY MASS SPECTROMETRY [LARGE SCALE ANALYSIS]</scope>
    <source>
        <tissue>Cervix carcinoma</tissue>
    </source>
</reference>
<reference key="7">
    <citation type="journal article" date="2009" name="Biochim. Biophys. Acta">
        <title>Abnormal regulation of TSG101 in mice with spongiform neurodegeneration.</title>
        <authorList>
            <person name="Jiao J."/>
            <person name="Sun K."/>
            <person name="Walker W.P."/>
            <person name="Bagher P."/>
            <person name="Cota C.D."/>
            <person name="Gunn T.M."/>
        </authorList>
    </citation>
    <scope>FUNCTION</scope>
    <scope>INTERACTION WITH TSG101</scope>
</reference>
<reference key="8">
    <citation type="journal article" date="2010" name="Proteomics">
        <title>Strategy for comprehensive identification of human N-myristoylated proteins using an insect cell-free protein synthesis system.</title>
        <authorList>
            <person name="Suzuki T."/>
            <person name="Moriya K."/>
            <person name="Nagatoshi K."/>
            <person name="Ota Y."/>
            <person name="Ezure T."/>
            <person name="Ando E."/>
            <person name="Tsunasawa S."/>
            <person name="Utsumi T."/>
        </authorList>
    </citation>
    <scope>MYRISTOYLATION AT GLY-2</scope>
</reference>
<reference key="9">
    <citation type="journal article" date="2010" name="Sci. Signal.">
        <title>Quantitative phosphoproteomics reveals widespread full phosphorylation site occupancy during mitosis.</title>
        <authorList>
            <person name="Olsen J.V."/>
            <person name="Vermeulen M."/>
            <person name="Santamaria A."/>
            <person name="Kumar C."/>
            <person name="Miller M.L."/>
            <person name="Jensen L.J."/>
            <person name="Gnad F."/>
            <person name="Cox J."/>
            <person name="Jensen T.S."/>
            <person name="Nigg E.A."/>
            <person name="Brunak S."/>
            <person name="Mann M."/>
        </authorList>
    </citation>
    <scope>IDENTIFICATION BY MASS SPECTROMETRY [LARGE SCALE ANALYSIS]</scope>
    <source>
        <tissue>Cervix carcinoma</tissue>
    </source>
</reference>
<reference key="10">
    <citation type="journal article" date="2012" name="Proc. Natl. Acad. Sci. U.S.A.">
        <title>N-terminal acetylome analyses and functional insights of the N-terminal acetyltransferase NatB.</title>
        <authorList>
            <person name="Van Damme P."/>
            <person name="Lasa M."/>
            <person name="Polevoda B."/>
            <person name="Gazquez C."/>
            <person name="Elosegui-Artola A."/>
            <person name="Kim D.S."/>
            <person name="De Juan-Pardo E."/>
            <person name="Demeyer K."/>
            <person name="Hole K."/>
            <person name="Larrea E."/>
            <person name="Timmerman E."/>
            <person name="Prieto J."/>
            <person name="Arnesen T."/>
            <person name="Sherman F."/>
            <person name="Gevaert K."/>
            <person name="Aldabe R."/>
        </authorList>
    </citation>
    <scope>IDENTIFICATION BY MASS SPECTROMETRY [LARGE SCALE ANALYSIS]</scope>
</reference>
<reference key="11">
    <citation type="journal article" date="2013" name="J. Proteome Res.">
        <title>Toward a comprehensive characterization of a human cancer cell phosphoproteome.</title>
        <authorList>
            <person name="Zhou H."/>
            <person name="Di Palma S."/>
            <person name="Preisinger C."/>
            <person name="Peng M."/>
            <person name="Polat A.N."/>
            <person name="Heck A.J."/>
            <person name="Mohammed S."/>
        </authorList>
    </citation>
    <scope>PHOSPHORYLATION [LARGE SCALE ANALYSIS] AT SER-524</scope>
    <scope>IDENTIFICATION BY MASS SPECTROMETRY [LARGE SCALE ANALYSIS]</scope>
    <source>
        <tissue>Erythroleukemia</tissue>
    </source>
</reference>
<evidence type="ECO:0000250" key="1"/>
<evidence type="ECO:0000250" key="2">
    <source>
        <dbReference type="UniProtKB" id="Q9D074"/>
    </source>
</evidence>
<evidence type="ECO:0000255" key="3">
    <source>
        <dbReference type="PROSITE-ProRule" id="PRU00175"/>
    </source>
</evidence>
<evidence type="ECO:0000256" key="4">
    <source>
        <dbReference type="SAM" id="MobiDB-lite"/>
    </source>
</evidence>
<evidence type="ECO:0000269" key="5">
    <source>
    </source>
</evidence>
<evidence type="ECO:0000269" key="6">
    <source>
    </source>
</evidence>
<evidence type="ECO:0000269" key="7">
    <source>
    </source>
</evidence>
<evidence type="ECO:0000269" key="8">
    <source>
    </source>
</evidence>
<evidence type="ECO:0000303" key="9">
    <source>
    </source>
</evidence>
<evidence type="ECO:0000303" key="10">
    <source>
    </source>
</evidence>
<evidence type="ECO:0000305" key="11"/>
<evidence type="ECO:0007744" key="12">
    <source>
    </source>
</evidence>
<evidence type="ECO:0007744" key="13">
    <source>
    </source>
</evidence>